<gene>
    <name type="primary">PBX3</name>
</gene>
<evidence type="ECO:0000255" key="1">
    <source>
        <dbReference type="PROSITE-ProRule" id="PRU00108"/>
    </source>
</evidence>
<evidence type="ECO:0000255" key="2">
    <source>
        <dbReference type="PROSITE-ProRule" id="PRU01322"/>
    </source>
</evidence>
<evidence type="ECO:0000256" key="3">
    <source>
        <dbReference type="SAM" id="MobiDB-lite"/>
    </source>
</evidence>
<evidence type="ECO:0000269" key="4">
    <source>
    </source>
</evidence>
<evidence type="ECO:0000303" key="5">
    <source>
    </source>
</evidence>
<evidence type="ECO:0000303" key="6">
    <source>
    </source>
</evidence>
<evidence type="ECO:0000303" key="7">
    <source>
    </source>
</evidence>
<evidence type="ECO:0000305" key="8"/>
<feature type="chain" id="PRO_0000049239" description="Pre-B-cell leukemia transcription factor 3">
    <location>
        <begin position="1"/>
        <end position="434"/>
    </location>
</feature>
<feature type="domain" description="PBC" evidence="2">
    <location>
        <begin position="41"/>
        <end position="234"/>
    </location>
</feature>
<feature type="DNA-binding region" description="Homeobox; TALE-type" evidence="1">
    <location>
        <begin position="235"/>
        <end position="297"/>
    </location>
</feature>
<feature type="region of interest" description="Disordered" evidence="3">
    <location>
        <begin position="20"/>
        <end position="41"/>
    </location>
</feature>
<feature type="region of interest" description="PBC-A" evidence="2">
    <location>
        <begin position="48"/>
        <end position="127"/>
    </location>
</feature>
<feature type="region of interest" description="PBC-B" evidence="2">
    <location>
        <begin position="130"/>
        <end position="234"/>
    </location>
</feature>
<feature type="region of interest" description="Disordered" evidence="3">
    <location>
        <begin position="326"/>
        <end position="349"/>
    </location>
</feature>
<feature type="region of interest" description="Disordered" evidence="3">
    <location>
        <begin position="403"/>
        <end position="434"/>
    </location>
</feature>
<feature type="compositionally biased region" description="Basic and acidic residues" evidence="3">
    <location>
        <begin position="32"/>
        <end position="41"/>
    </location>
</feature>
<feature type="compositionally biased region" description="Low complexity" evidence="3">
    <location>
        <begin position="326"/>
        <end position="341"/>
    </location>
</feature>
<feature type="compositionally biased region" description="Polar residues" evidence="3">
    <location>
        <begin position="403"/>
        <end position="422"/>
    </location>
</feature>
<feature type="splice variant" id="VSP_002275" description="In isoform PBX3c and isoform PBX3d." evidence="5 6">
    <location>
        <begin position="1"/>
        <end position="181"/>
    </location>
</feature>
<feature type="splice variant" id="VSP_046311" description="In isoform 5." evidence="6">
    <location>
        <begin position="1"/>
        <end position="75"/>
    </location>
</feature>
<feature type="splice variant" id="VSP_002276" description="In isoform PBX3b and isoform PBX3d." evidence="5 7">
    <original>SSGSFNLPNSGDMF</original>
    <variation>GYPPSCYQSDGRLQ</variation>
    <location>
        <begin position="338"/>
        <end position="351"/>
    </location>
</feature>
<feature type="splice variant" id="VSP_002277" description="In isoform PBX3b and isoform PBX3d." evidence="5 7">
    <location>
        <begin position="352"/>
        <end position="434"/>
    </location>
</feature>
<feature type="sequence conflict" description="In Ref. 2; AAL09477." evidence="8" ref="2">
    <original>V</original>
    <variation>A</variation>
    <location>
        <position position="323"/>
    </location>
</feature>
<feature type="sequence conflict" description="In Ref. 2; AAL09477." evidence="8" ref="2">
    <original>Y</original>
    <variation>C</variation>
    <location>
        <position position="398"/>
    </location>
</feature>
<protein>
    <recommendedName>
        <fullName>Pre-B-cell leukemia transcription factor 3</fullName>
    </recommendedName>
    <alternativeName>
        <fullName>Homeobox protein PBX3</fullName>
    </alternativeName>
</protein>
<keyword id="KW-0010">Activator</keyword>
<keyword id="KW-0025">Alternative splicing</keyword>
<keyword id="KW-0238">DNA-binding</keyword>
<keyword id="KW-0371">Homeobox</keyword>
<keyword id="KW-0539">Nucleus</keyword>
<keyword id="KW-1267">Proteomics identification</keyword>
<keyword id="KW-1185">Reference proteome</keyword>
<keyword id="KW-0804">Transcription</keyword>
<keyword id="KW-0805">Transcription regulation</keyword>
<reference key="1">
    <citation type="journal article" date="1991" name="Mol. Cell. Biol.">
        <title>PBX2 and PBX3, new homeobox genes with extensive homology to the human proto-oncogene PBX1.</title>
        <authorList>
            <person name="Monica K."/>
            <person name="Galili N."/>
            <person name="Nourse J."/>
            <person name="Saltman D."/>
            <person name="Cleary M.L."/>
        </authorList>
    </citation>
    <scope>NUCLEOTIDE SEQUENCE [MRNA] (ISOFORMS PBX3A AND PBX3B)</scope>
</reference>
<reference key="2">
    <citation type="journal article" date="2001" name="Genes Chromosomes Cancer">
        <title>Novel alternative PBX3 isoforms in leukemia cells with distinct interaction specificities.</title>
        <authorList>
            <person name="Milech N."/>
            <person name="Kees U.R."/>
            <person name="Watt P.M."/>
        </authorList>
    </citation>
    <scope>NUCLEOTIDE SEQUENCE [MRNA] (ISOFORMS PBX3C AND PBX3D)</scope>
</reference>
<reference key="3">
    <citation type="journal article" date="2004" name="Nat. Genet.">
        <title>Complete sequencing and characterization of 21,243 full-length human cDNAs.</title>
        <authorList>
            <person name="Ota T."/>
            <person name="Suzuki Y."/>
            <person name="Nishikawa T."/>
            <person name="Otsuki T."/>
            <person name="Sugiyama T."/>
            <person name="Irie R."/>
            <person name="Wakamatsu A."/>
            <person name="Hayashi K."/>
            <person name="Sato H."/>
            <person name="Nagai K."/>
            <person name="Kimura K."/>
            <person name="Makita H."/>
            <person name="Sekine M."/>
            <person name="Obayashi M."/>
            <person name="Nishi T."/>
            <person name="Shibahara T."/>
            <person name="Tanaka T."/>
            <person name="Ishii S."/>
            <person name="Yamamoto J."/>
            <person name="Saito K."/>
            <person name="Kawai Y."/>
            <person name="Isono Y."/>
            <person name="Nakamura Y."/>
            <person name="Nagahari K."/>
            <person name="Murakami K."/>
            <person name="Yasuda T."/>
            <person name="Iwayanagi T."/>
            <person name="Wagatsuma M."/>
            <person name="Shiratori A."/>
            <person name="Sudo H."/>
            <person name="Hosoiri T."/>
            <person name="Kaku Y."/>
            <person name="Kodaira H."/>
            <person name="Kondo H."/>
            <person name="Sugawara M."/>
            <person name="Takahashi M."/>
            <person name="Kanda K."/>
            <person name="Yokoi T."/>
            <person name="Furuya T."/>
            <person name="Kikkawa E."/>
            <person name="Omura Y."/>
            <person name="Abe K."/>
            <person name="Kamihara K."/>
            <person name="Katsuta N."/>
            <person name="Sato K."/>
            <person name="Tanikawa M."/>
            <person name="Yamazaki M."/>
            <person name="Ninomiya K."/>
            <person name="Ishibashi T."/>
            <person name="Yamashita H."/>
            <person name="Murakawa K."/>
            <person name="Fujimori K."/>
            <person name="Tanai H."/>
            <person name="Kimata M."/>
            <person name="Watanabe M."/>
            <person name="Hiraoka S."/>
            <person name="Chiba Y."/>
            <person name="Ishida S."/>
            <person name="Ono Y."/>
            <person name="Takiguchi S."/>
            <person name="Watanabe S."/>
            <person name="Yosida M."/>
            <person name="Hotuta T."/>
            <person name="Kusano J."/>
            <person name="Kanehori K."/>
            <person name="Takahashi-Fujii A."/>
            <person name="Hara H."/>
            <person name="Tanase T.-O."/>
            <person name="Nomura Y."/>
            <person name="Togiya S."/>
            <person name="Komai F."/>
            <person name="Hara R."/>
            <person name="Takeuchi K."/>
            <person name="Arita M."/>
            <person name="Imose N."/>
            <person name="Musashino K."/>
            <person name="Yuuki H."/>
            <person name="Oshima A."/>
            <person name="Sasaki N."/>
            <person name="Aotsuka S."/>
            <person name="Yoshikawa Y."/>
            <person name="Matsunawa H."/>
            <person name="Ichihara T."/>
            <person name="Shiohata N."/>
            <person name="Sano S."/>
            <person name="Moriya S."/>
            <person name="Momiyama H."/>
            <person name="Satoh N."/>
            <person name="Takami S."/>
            <person name="Terashima Y."/>
            <person name="Suzuki O."/>
            <person name="Nakagawa S."/>
            <person name="Senoh A."/>
            <person name="Mizoguchi H."/>
            <person name="Goto Y."/>
            <person name="Shimizu F."/>
            <person name="Wakebe H."/>
            <person name="Hishigaki H."/>
            <person name="Watanabe T."/>
            <person name="Sugiyama A."/>
            <person name="Takemoto M."/>
            <person name="Kawakami B."/>
            <person name="Yamazaki M."/>
            <person name="Watanabe K."/>
            <person name="Kumagai A."/>
            <person name="Itakura S."/>
            <person name="Fukuzumi Y."/>
            <person name="Fujimori Y."/>
            <person name="Komiyama M."/>
            <person name="Tashiro H."/>
            <person name="Tanigami A."/>
            <person name="Fujiwara T."/>
            <person name="Ono T."/>
            <person name="Yamada K."/>
            <person name="Fujii Y."/>
            <person name="Ozaki K."/>
            <person name="Hirao M."/>
            <person name="Ohmori Y."/>
            <person name="Kawabata A."/>
            <person name="Hikiji T."/>
            <person name="Kobatake N."/>
            <person name="Inagaki H."/>
            <person name="Ikema Y."/>
            <person name="Okamoto S."/>
            <person name="Okitani R."/>
            <person name="Kawakami T."/>
            <person name="Noguchi S."/>
            <person name="Itoh T."/>
            <person name="Shigeta K."/>
            <person name="Senba T."/>
            <person name="Matsumura K."/>
            <person name="Nakajima Y."/>
            <person name="Mizuno T."/>
            <person name="Morinaga M."/>
            <person name="Sasaki M."/>
            <person name="Togashi T."/>
            <person name="Oyama M."/>
            <person name="Hata H."/>
            <person name="Watanabe M."/>
            <person name="Komatsu T."/>
            <person name="Mizushima-Sugano J."/>
            <person name="Satoh T."/>
            <person name="Shirai Y."/>
            <person name="Takahashi Y."/>
            <person name="Nakagawa K."/>
            <person name="Okumura K."/>
            <person name="Nagase T."/>
            <person name="Nomura N."/>
            <person name="Kikuchi H."/>
            <person name="Masuho Y."/>
            <person name="Yamashita R."/>
            <person name="Nakai K."/>
            <person name="Yada T."/>
            <person name="Nakamura Y."/>
            <person name="Ohara O."/>
            <person name="Isogai T."/>
            <person name="Sugano S."/>
        </authorList>
    </citation>
    <scope>NUCLEOTIDE SEQUENCE [LARGE SCALE MRNA] (ISOFORMS PBX3C AND 5)</scope>
    <source>
        <tissue>Adrenal gland</tissue>
        <tissue>Teratocarcinoma</tissue>
    </source>
</reference>
<reference key="4">
    <citation type="journal article" date="2004" name="Nature">
        <title>DNA sequence and analysis of human chromosome 9.</title>
        <authorList>
            <person name="Humphray S.J."/>
            <person name="Oliver K."/>
            <person name="Hunt A.R."/>
            <person name="Plumb R.W."/>
            <person name="Loveland J.E."/>
            <person name="Howe K.L."/>
            <person name="Andrews T.D."/>
            <person name="Searle S."/>
            <person name="Hunt S.E."/>
            <person name="Scott C.E."/>
            <person name="Jones M.C."/>
            <person name="Ainscough R."/>
            <person name="Almeida J.P."/>
            <person name="Ambrose K.D."/>
            <person name="Ashwell R.I.S."/>
            <person name="Babbage A.K."/>
            <person name="Babbage S."/>
            <person name="Bagguley C.L."/>
            <person name="Bailey J."/>
            <person name="Banerjee R."/>
            <person name="Barker D.J."/>
            <person name="Barlow K.F."/>
            <person name="Bates K."/>
            <person name="Beasley H."/>
            <person name="Beasley O."/>
            <person name="Bird C.P."/>
            <person name="Bray-Allen S."/>
            <person name="Brown A.J."/>
            <person name="Brown J.Y."/>
            <person name="Burford D."/>
            <person name="Burrill W."/>
            <person name="Burton J."/>
            <person name="Carder C."/>
            <person name="Carter N.P."/>
            <person name="Chapman J.C."/>
            <person name="Chen Y."/>
            <person name="Clarke G."/>
            <person name="Clark S.Y."/>
            <person name="Clee C.M."/>
            <person name="Clegg S."/>
            <person name="Collier R.E."/>
            <person name="Corby N."/>
            <person name="Crosier M."/>
            <person name="Cummings A.T."/>
            <person name="Davies J."/>
            <person name="Dhami P."/>
            <person name="Dunn M."/>
            <person name="Dutta I."/>
            <person name="Dyer L.W."/>
            <person name="Earthrowl M.E."/>
            <person name="Faulkner L."/>
            <person name="Fleming C.J."/>
            <person name="Frankish A."/>
            <person name="Frankland J.A."/>
            <person name="French L."/>
            <person name="Fricker D.G."/>
            <person name="Garner P."/>
            <person name="Garnett J."/>
            <person name="Ghori J."/>
            <person name="Gilbert J.G.R."/>
            <person name="Glison C."/>
            <person name="Grafham D.V."/>
            <person name="Gribble S."/>
            <person name="Griffiths C."/>
            <person name="Griffiths-Jones S."/>
            <person name="Grocock R."/>
            <person name="Guy J."/>
            <person name="Hall R.E."/>
            <person name="Hammond S."/>
            <person name="Harley J.L."/>
            <person name="Harrison E.S.I."/>
            <person name="Hart E.A."/>
            <person name="Heath P.D."/>
            <person name="Henderson C.D."/>
            <person name="Hopkins B.L."/>
            <person name="Howard P.J."/>
            <person name="Howden P.J."/>
            <person name="Huckle E."/>
            <person name="Johnson C."/>
            <person name="Johnson D."/>
            <person name="Joy A.A."/>
            <person name="Kay M."/>
            <person name="Keenan S."/>
            <person name="Kershaw J.K."/>
            <person name="Kimberley A.M."/>
            <person name="King A."/>
            <person name="Knights A."/>
            <person name="Laird G.K."/>
            <person name="Langford C."/>
            <person name="Lawlor S."/>
            <person name="Leongamornlert D.A."/>
            <person name="Leversha M."/>
            <person name="Lloyd C."/>
            <person name="Lloyd D.M."/>
            <person name="Lovell J."/>
            <person name="Martin S."/>
            <person name="Mashreghi-Mohammadi M."/>
            <person name="Matthews L."/>
            <person name="McLaren S."/>
            <person name="McLay K.E."/>
            <person name="McMurray A."/>
            <person name="Milne S."/>
            <person name="Nickerson T."/>
            <person name="Nisbett J."/>
            <person name="Nordsiek G."/>
            <person name="Pearce A.V."/>
            <person name="Peck A.I."/>
            <person name="Porter K.M."/>
            <person name="Pandian R."/>
            <person name="Pelan S."/>
            <person name="Phillimore B."/>
            <person name="Povey S."/>
            <person name="Ramsey Y."/>
            <person name="Rand V."/>
            <person name="Scharfe M."/>
            <person name="Sehra H.K."/>
            <person name="Shownkeen R."/>
            <person name="Sims S.K."/>
            <person name="Skuce C.D."/>
            <person name="Smith M."/>
            <person name="Steward C.A."/>
            <person name="Swarbreck D."/>
            <person name="Sycamore N."/>
            <person name="Tester J."/>
            <person name="Thorpe A."/>
            <person name="Tracey A."/>
            <person name="Tromans A."/>
            <person name="Thomas D.W."/>
            <person name="Wall M."/>
            <person name="Wallis J.M."/>
            <person name="West A.P."/>
            <person name="Whitehead S.L."/>
            <person name="Willey D.L."/>
            <person name="Williams S.A."/>
            <person name="Wilming L."/>
            <person name="Wray P.W."/>
            <person name="Young L."/>
            <person name="Ashurst J.L."/>
            <person name="Coulson A."/>
            <person name="Blocker H."/>
            <person name="Durbin R.M."/>
            <person name="Sulston J.E."/>
            <person name="Hubbard T."/>
            <person name="Jackson M.J."/>
            <person name="Bentley D.R."/>
            <person name="Beck S."/>
            <person name="Rogers J."/>
            <person name="Dunham I."/>
        </authorList>
    </citation>
    <scope>NUCLEOTIDE SEQUENCE [LARGE SCALE GENOMIC DNA]</scope>
</reference>
<reference key="5">
    <citation type="journal article" date="2004" name="Genome Res.">
        <title>The status, quality, and expansion of the NIH full-length cDNA project: the Mammalian Gene Collection (MGC).</title>
        <authorList>
            <consortium name="The MGC Project Team"/>
        </authorList>
    </citation>
    <scope>NUCLEOTIDE SEQUENCE [LARGE SCALE MRNA] (ISOFORM PBX3A)</scope>
    <source>
        <tissue>Blood</tissue>
    </source>
</reference>
<reference key="6">
    <citation type="journal article" date="1994" name="Mol. Cell. Biol.">
        <title>Fusion with E2A converts the Pbx1 homeodomain protein into a constitutive transcriptional activator in human leukemias carrying the t(1;19) translocation.</title>
        <authorList>
            <person name="Lu Q."/>
            <person name="Wright D.D."/>
            <person name="Kamps M.P."/>
        </authorList>
    </citation>
    <scope>CHARACTERIZATION</scope>
</reference>
<reference key="7">
    <citation type="journal article" date="2000" name="J. Biol. Chem.">
        <title>Functional cloning and characterization of a novel nonhomeodomain protein that inhibits the binding of PBX1-HOX complexes to DNA.</title>
        <authorList>
            <person name="Abramovich C."/>
            <person name="Shen W.-F."/>
            <person name="Pineault N."/>
            <person name="Imren S."/>
            <person name="Montpetit B."/>
            <person name="Largman C."/>
            <person name="Humphries R.K."/>
        </authorList>
    </citation>
    <scope>INTERACTION WITH PBXIP1</scope>
</reference>
<proteinExistence type="evidence at protein level"/>
<organism>
    <name type="scientific">Homo sapiens</name>
    <name type="common">Human</name>
    <dbReference type="NCBI Taxonomy" id="9606"/>
    <lineage>
        <taxon>Eukaryota</taxon>
        <taxon>Metazoa</taxon>
        <taxon>Chordata</taxon>
        <taxon>Craniata</taxon>
        <taxon>Vertebrata</taxon>
        <taxon>Euteleostomi</taxon>
        <taxon>Mammalia</taxon>
        <taxon>Eutheria</taxon>
        <taxon>Euarchontoglires</taxon>
        <taxon>Primates</taxon>
        <taxon>Haplorrhini</taxon>
        <taxon>Catarrhini</taxon>
        <taxon>Hominidae</taxon>
        <taxon>Homo</taxon>
    </lineage>
</organism>
<name>PBX3_HUMAN</name>
<comment type="function">
    <text>Transcriptional activator that binds the sequence 5'-ATCAATCAA-3'.</text>
</comment>
<comment type="subunit">
    <text evidence="4">Interacts with PBXIP1.</text>
</comment>
<comment type="subcellular location">
    <subcellularLocation>
        <location evidence="8">Nucleus</location>
    </subcellularLocation>
</comment>
<comment type="alternative products">
    <event type="alternative splicing"/>
    <isoform>
        <id>P40426-1</id>
        <name>PBX3a</name>
        <sequence type="displayed"/>
    </isoform>
    <isoform>
        <id>P40426-2</id>
        <name>PBX3b</name>
        <sequence type="described" ref="VSP_002276 VSP_002277"/>
    </isoform>
    <isoform>
        <id>P40426-3</id>
        <name>PBX3c</name>
        <sequence type="described" ref="VSP_002275"/>
    </isoform>
    <isoform>
        <id>P40426-4</id>
        <name>PBX3d</name>
        <sequence type="described" ref="VSP_002275 VSP_002276 VSP_002277"/>
    </isoform>
    <isoform>
        <id>P40426-5</id>
        <name>5</name>
        <sequence type="described" ref="VSP_046311"/>
    </isoform>
</comment>
<comment type="tissue specificity">
    <text>Ubiquitously expressed.</text>
</comment>
<comment type="similarity">
    <text evidence="8">Belongs to the TALE/PBX homeobox family.</text>
</comment>
<sequence>MDDQSRMLQTLAGVNLAGHSVQGGMALPPPPHGHEGADGDGRKQDIGDILHQIMTITDQSLDEAQAKKHALNCHRMKPALFSVLCEIKEKTGLSIRGAQEEDPPDPQLMRLDNMLLAEGVSGPEKGGGSAAAAAAAAASGGSSDNSIEHSDYRAKLTQIRQIYHTELEKYEQACNEFTTHVMNLLREQSRTRPISPKEIERMVGIIHRKFSSIQMQLKQSTCEAVMILRSRFLDARRKRRNFSKQATEILNEYFYSHLSNPYPSEEAKEELAKKCSITVSQVSNWFGNKRIRYKKNIGKFQEEANLYAAKTAVTAAHAVAAAVQNNQTNSPTTPNSGSSGSFNLPNSGDMFMNMQSLNGDSYQGSQVGANVQSQVDTLRHVINQTGGYSDGLGGNSLYSPHNLNANGGWQDATTPSSVTSPTEGPGSVHSDTSN</sequence>
<dbReference type="EMBL" id="X59841">
    <property type="protein sequence ID" value="CAA42502.1"/>
    <property type="molecule type" value="mRNA"/>
</dbReference>
<dbReference type="EMBL" id="AF355141">
    <property type="protein sequence ID" value="AAL09477.1"/>
    <property type="molecule type" value="mRNA"/>
</dbReference>
<dbReference type="EMBL" id="AF355142">
    <property type="protein sequence ID" value="AAL09478.1"/>
    <property type="molecule type" value="mRNA"/>
</dbReference>
<dbReference type="EMBL" id="AK289376">
    <property type="protein sequence ID" value="BAF82065.1"/>
    <property type="molecule type" value="mRNA"/>
</dbReference>
<dbReference type="EMBL" id="AK309713">
    <property type="status" value="NOT_ANNOTATED_CDS"/>
    <property type="molecule type" value="mRNA"/>
</dbReference>
<dbReference type="EMBL" id="AL358074">
    <property type="status" value="NOT_ANNOTATED_CDS"/>
    <property type="molecule type" value="Genomic_DNA"/>
</dbReference>
<dbReference type="EMBL" id="AL445186">
    <property type="status" value="NOT_ANNOTATED_CDS"/>
    <property type="molecule type" value="Genomic_DNA"/>
</dbReference>
<dbReference type="EMBL" id="AL627303">
    <property type="status" value="NOT_ANNOTATED_CDS"/>
    <property type="molecule type" value="Genomic_DNA"/>
</dbReference>
<dbReference type="EMBL" id="BC094883">
    <property type="protein sequence ID" value="AAH94883.1"/>
    <property type="molecule type" value="mRNA"/>
</dbReference>
<dbReference type="CCDS" id="CCDS48021.1">
    <molecule id="P40426-5"/>
</dbReference>
<dbReference type="CCDS" id="CCDS6865.1">
    <molecule id="P40426-1"/>
</dbReference>
<dbReference type="CCDS" id="CCDS83416.1">
    <molecule id="P40426-2"/>
</dbReference>
<dbReference type="PIR" id="S19010">
    <property type="entry name" value="S19010"/>
</dbReference>
<dbReference type="RefSeq" id="NP_001128250.1">
    <molecule id="P40426-5"/>
    <property type="nucleotide sequence ID" value="NM_001134778.2"/>
</dbReference>
<dbReference type="RefSeq" id="NP_001317711.1">
    <molecule id="P40426-2"/>
    <property type="nucleotide sequence ID" value="NM_001330782.2"/>
</dbReference>
<dbReference type="RefSeq" id="NP_006186.1">
    <molecule id="P40426-1"/>
    <property type="nucleotide sequence ID" value="NM_006195.6"/>
</dbReference>
<dbReference type="RefSeq" id="XP_047279399.1">
    <molecule id="P40426-2"/>
    <property type="nucleotide sequence ID" value="XM_047423443.1"/>
</dbReference>
<dbReference type="SMR" id="P40426"/>
<dbReference type="BioGRID" id="111123">
    <property type="interactions" value="92"/>
</dbReference>
<dbReference type="CORUM" id="P40426"/>
<dbReference type="FunCoup" id="P40426">
    <property type="interactions" value="2881"/>
</dbReference>
<dbReference type="IntAct" id="P40426">
    <property type="interactions" value="22"/>
</dbReference>
<dbReference type="MINT" id="P40426"/>
<dbReference type="STRING" id="9606.ENSP00000362588"/>
<dbReference type="iPTMnet" id="P40426"/>
<dbReference type="PhosphoSitePlus" id="P40426"/>
<dbReference type="BioMuta" id="PBX3"/>
<dbReference type="DMDM" id="730281"/>
<dbReference type="jPOST" id="P40426"/>
<dbReference type="MassIVE" id="P40426"/>
<dbReference type="PaxDb" id="9606-ENSP00000362588"/>
<dbReference type="PeptideAtlas" id="P40426"/>
<dbReference type="ProteomicsDB" id="19129"/>
<dbReference type="ProteomicsDB" id="55370">
    <molecule id="P40426-1"/>
</dbReference>
<dbReference type="ProteomicsDB" id="55371">
    <molecule id="P40426-2"/>
</dbReference>
<dbReference type="ProteomicsDB" id="55372">
    <molecule id="P40426-3"/>
</dbReference>
<dbReference type="ProteomicsDB" id="55373">
    <molecule id="P40426-4"/>
</dbReference>
<dbReference type="Pumba" id="P40426"/>
<dbReference type="Antibodypedia" id="16509">
    <property type="antibodies" value="214 antibodies from 27 providers"/>
</dbReference>
<dbReference type="DNASU" id="5090"/>
<dbReference type="Ensembl" id="ENST00000342287.9">
    <molecule id="P40426-2"/>
    <property type="protein sequence ID" value="ENSP00000341990.5"/>
    <property type="gene ID" value="ENSG00000167081.18"/>
</dbReference>
<dbReference type="Ensembl" id="ENST00000373489.10">
    <molecule id="P40426-1"/>
    <property type="protein sequence ID" value="ENSP00000362588.5"/>
    <property type="gene ID" value="ENSG00000167081.18"/>
</dbReference>
<dbReference type="Ensembl" id="ENST00000447726.6">
    <molecule id="P40426-5"/>
    <property type="protein sequence ID" value="ENSP00000387456.2"/>
    <property type="gene ID" value="ENSG00000167081.18"/>
</dbReference>
<dbReference type="GeneID" id="5090"/>
<dbReference type="KEGG" id="hsa:5090"/>
<dbReference type="MANE-Select" id="ENST00000373489.10">
    <property type="protein sequence ID" value="ENSP00000362588.5"/>
    <property type="RefSeq nucleotide sequence ID" value="NM_006195.6"/>
    <property type="RefSeq protein sequence ID" value="NP_006186.1"/>
</dbReference>
<dbReference type="UCSC" id="uc004bqb.4">
    <molecule id="P40426-1"/>
    <property type="organism name" value="human"/>
</dbReference>
<dbReference type="AGR" id="HGNC:8634"/>
<dbReference type="CTD" id="5090"/>
<dbReference type="DisGeNET" id="5090"/>
<dbReference type="GeneCards" id="PBX3"/>
<dbReference type="HGNC" id="HGNC:8634">
    <property type="gene designation" value="PBX3"/>
</dbReference>
<dbReference type="HPA" id="ENSG00000167081">
    <property type="expression patterns" value="Tissue enhanced (parathyroid)"/>
</dbReference>
<dbReference type="MIM" id="176312">
    <property type="type" value="gene"/>
</dbReference>
<dbReference type="neXtProt" id="NX_P40426"/>
<dbReference type="OpenTargets" id="ENSG00000167081"/>
<dbReference type="PharmGKB" id="PA32972"/>
<dbReference type="VEuPathDB" id="HostDB:ENSG00000167081"/>
<dbReference type="eggNOG" id="KOG0774">
    <property type="taxonomic scope" value="Eukaryota"/>
</dbReference>
<dbReference type="GeneTree" id="ENSGT00940000154374"/>
<dbReference type="HOGENOM" id="CLU_041153_1_0_1"/>
<dbReference type="InParanoid" id="P40426"/>
<dbReference type="OrthoDB" id="4187154at2759"/>
<dbReference type="PAN-GO" id="P40426">
    <property type="GO annotations" value="8 GO annotations based on evolutionary models"/>
</dbReference>
<dbReference type="PhylomeDB" id="P40426"/>
<dbReference type="TreeFam" id="TF314340"/>
<dbReference type="PathwayCommons" id="P40426"/>
<dbReference type="SignaLink" id="P40426"/>
<dbReference type="SIGNOR" id="P40426"/>
<dbReference type="BioGRID-ORCS" id="5090">
    <property type="hits" value="11 hits in 1173 CRISPR screens"/>
</dbReference>
<dbReference type="ChiTaRS" id="PBX3">
    <property type="organism name" value="human"/>
</dbReference>
<dbReference type="GeneWiki" id="PBX3"/>
<dbReference type="GenomeRNAi" id="5090"/>
<dbReference type="Pharos" id="P40426">
    <property type="development level" value="Tbio"/>
</dbReference>
<dbReference type="PRO" id="PR:P40426"/>
<dbReference type="Proteomes" id="UP000005640">
    <property type="component" value="Chromosome 9"/>
</dbReference>
<dbReference type="RNAct" id="P40426">
    <property type="molecule type" value="protein"/>
</dbReference>
<dbReference type="Bgee" id="ENSG00000167081">
    <property type="expression patterns" value="Expressed in left ovary and 177 other cell types or tissues"/>
</dbReference>
<dbReference type="ExpressionAtlas" id="P40426">
    <property type="expression patterns" value="baseline and differential"/>
</dbReference>
<dbReference type="GO" id="GO:0000785">
    <property type="term" value="C:chromatin"/>
    <property type="evidence" value="ECO:0000247"/>
    <property type="project" value="NTNU_SB"/>
</dbReference>
<dbReference type="GO" id="GO:0005634">
    <property type="term" value="C:nucleus"/>
    <property type="evidence" value="ECO:0007669"/>
    <property type="project" value="UniProtKB-SubCell"/>
</dbReference>
<dbReference type="GO" id="GO:0005667">
    <property type="term" value="C:transcription regulator complex"/>
    <property type="evidence" value="ECO:0007669"/>
    <property type="project" value="Ensembl"/>
</dbReference>
<dbReference type="GO" id="GO:0001228">
    <property type="term" value="F:DNA-binding transcription activator activity, RNA polymerase II-specific"/>
    <property type="evidence" value="ECO:0007669"/>
    <property type="project" value="Ensembl"/>
</dbReference>
<dbReference type="GO" id="GO:0000981">
    <property type="term" value="F:DNA-binding transcription factor activity, RNA polymerase II-specific"/>
    <property type="evidence" value="ECO:0000247"/>
    <property type="project" value="NTNU_SB"/>
</dbReference>
<dbReference type="GO" id="GO:0000978">
    <property type="term" value="F:RNA polymerase II cis-regulatory region sequence-specific DNA binding"/>
    <property type="evidence" value="ECO:0007669"/>
    <property type="project" value="Ensembl"/>
</dbReference>
<dbReference type="GO" id="GO:0008344">
    <property type="term" value="P:adult locomotory behavior"/>
    <property type="evidence" value="ECO:0007669"/>
    <property type="project" value="Ensembl"/>
</dbReference>
<dbReference type="GO" id="GO:0009887">
    <property type="term" value="P:animal organ morphogenesis"/>
    <property type="evidence" value="ECO:0000318"/>
    <property type="project" value="GO_Central"/>
</dbReference>
<dbReference type="GO" id="GO:0007387">
    <property type="term" value="P:anterior compartment pattern formation"/>
    <property type="evidence" value="ECO:0000304"/>
    <property type="project" value="ProtInc"/>
</dbReference>
<dbReference type="GO" id="GO:0007420">
    <property type="term" value="P:brain development"/>
    <property type="evidence" value="ECO:0000318"/>
    <property type="project" value="GO_Central"/>
</dbReference>
<dbReference type="GO" id="GO:0021516">
    <property type="term" value="P:dorsal spinal cord development"/>
    <property type="evidence" value="ECO:0007669"/>
    <property type="project" value="Ensembl"/>
</dbReference>
<dbReference type="GO" id="GO:0048568">
    <property type="term" value="P:embryonic organ development"/>
    <property type="evidence" value="ECO:0000318"/>
    <property type="project" value="GO_Central"/>
</dbReference>
<dbReference type="GO" id="GO:0001654">
    <property type="term" value="P:eye development"/>
    <property type="evidence" value="ECO:0000318"/>
    <property type="project" value="GO_Central"/>
</dbReference>
<dbReference type="GO" id="GO:0048666">
    <property type="term" value="P:neuron development"/>
    <property type="evidence" value="ECO:0000318"/>
    <property type="project" value="GO_Central"/>
</dbReference>
<dbReference type="GO" id="GO:0007388">
    <property type="term" value="P:posterior compartment specification"/>
    <property type="evidence" value="ECO:0000304"/>
    <property type="project" value="ProtInc"/>
</dbReference>
<dbReference type="GO" id="GO:0002087">
    <property type="term" value="P:regulation of respiratory gaseous exchange by nervous system process"/>
    <property type="evidence" value="ECO:0007669"/>
    <property type="project" value="Ensembl"/>
</dbReference>
<dbReference type="GO" id="GO:0007585">
    <property type="term" value="P:respiratory gaseous exchange by respiratory system"/>
    <property type="evidence" value="ECO:0007669"/>
    <property type="project" value="Ensembl"/>
</dbReference>
<dbReference type="CDD" id="cd00086">
    <property type="entry name" value="homeodomain"/>
    <property type="match status" value="1"/>
</dbReference>
<dbReference type="FunFam" id="1.10.10.60:FF:000008">
    <property type="entry name" value="Pre-B-cell leukemia transcription factor 1"/>
    <property type="match status" value="1"/>
</dbReference>
<dbReference type="Gene3D" id="1.10.10.60">
    <property type="entry name" value="Homeodomain-like"/>
    <property type="match status" value="1"/>
</dbReference>
<dbReference type="InterPro" id="IPR001356">
    <property type="entry name" value="HD"/>
</dbReference>
<dbReference type="InterPro" id="IPR017970">
    <property type="entry name" value="Homeobox_CS"/>
</dbReference>
<dbReference type="InterPro" id="IPR009057">
    <property type="entry name" value="Homeodomain-like_sf"/>
</dbReference>
<dbReference type="InterPro" id="IPR008422">
    <property type="entry name" value="KN_HD"/>
</dbReference>
<dbReference type="InterPro" id="IPR005542">
    <property type="entry name" value="PBX_PBC_dom"/>
</dbReference>
<dbReference type="InterPro" id="IPR050224">
    <property type="entry name" value="TALE_homeobox"/>
</dbReference>
<dbReference type="PANTHER" id="PTHR11850">
    <property type="entry name" value="HOMEOBOX PROTEIN TRANSCRIPTION FACTORS"/>
    <property type="match status" value="1"/>
</dbReference>
<dbReference type="Pfam" id="PF05920">
    <property type="entry name" value="Homeobox_KN"/>
    <property type="match status" value="1"/>
</dbReference>
<dbReference type="Pfam" id="PF03792">
    <property type="entry name" value="PBC"/>
    <property type="match status" value="1"/>
</dbReference>
<dbReference type="SMART" id="SM00389">
    <property type="entry name" value="HOX"/>
    <property type="match status" value="1"/>
</dbReference>
<dbReference type="SUPFAM" id="SSF46689">
    <property type="entry name" value="Homeodomain-like"/>
    <property type="match status" value="1"/>
</dbReference>
<dbReference type="PROSITE" id="PS00027">
    <property type="entry name" value="HOMEOBOX_1"/>
    <property type="match status" value="1"/>
</dbReference>
<dbReference type="PROSITE" id="PS50071">
    <property type="entry name" value="HOMEOBOX_2"/>
    <property type="match status" value="1"/>
</dbReference>
<dbReference type="PROSITE" id="PS51978">
    <property type="entry name" value="PBC"/>
    <property type="match status" value="1"/>
</dbReference>
<accession>P40426</accession>
<accession>E9PB27</accession>
<accession>Q5JSA0</accession>
<accession>Q5JSA1</accession>
<accession>Q5VXL3</accession>
<accession>Q96PF9</accession>
<accession>Q96PG0</accession>